<protein>
    <recommendedName>
        <fullName>Neutral protease 2 homolog MGYG_06241</fullName>
        <ecNumber>3.4.24.39</ecNumber>
    </recommendedName>
    <alternativeName>
        <fullName>Deuterolysin MGYG_06241</fullName>
    </alternativeName>
</protein>
<feature type="signal peptide" evidence="2">
    <location>
        <begin position="1"/>
        <end position="19"/>
    </location>
</feature>
<feature type="propeptide" id="PRO_0000407144" evidence="1">
    <location>
        <begin position="20"/>
        <end position="188"/>
    </location>
</feature>
<feature type="chain" id="PRO_0000407145" description="Neutral protease 2 homolog MGYG_06241">
    <location>
        <begin position="189"/>
        <end position="372"/>
    </location>
</feature>
<feature type="active site" evidence="1">
    <location>
        <position position="314"/>
    </location>
</feature>
<feature type="binding site" evidence="1">
    <location>
        <position position="313"/>
    </location>
    <ligand>
        <name>Zn(2+)</name>
        <dbReference type="ChEBI" id="CHEBI:29105"/>
        <note>catalytic</note>
    </ligand>
</feature>
<feature type="binding site" evidence="1">
    <location>
        <position position="317"/>
    </location>
    <ligand>
        <name>Zn(2+)</name>
        <dbReference type="ChEBI" id="CHEBI:29105"/>
        <note>catalytic</note>
    </ligand>
</feature>
<feature type="binding site" evidence="1">
    <location>
        <position position="328"/>
    </location>
    <ligand>
        <name>Zn(2+)</name>
        <dbReference type="ChEBI" id="CHEBI:29105"/>
        <note>catalytic</note>
    </ligand>
</feature>
<feature type="disulfide bond" evidence="1">
    <location>
        <begin position="195"/>
        <end position="264"/>
    </location>
</feature>
<feature type="disulfide bond" evidence="1">
    <location>
        <begin position="271"/>
        <end position="289"/>
    </location>
</feature>
<proteinExistence type="inferred from homology"/>
<dbReference type="EC" id="3.4.24.39"/>
<dbReference type="EMBL" id="DS989826">
    <property type="protein sequence ID" value="EFR03239.1"/>
    <property type="molecule type" value="Genomic_DNA"/>
</dbReference>
<dbReference type="RefSeq" id="XP_003171693.1">
    <property type="nucleotide sequence ID" value="XM_003171645.1"/>
</dbReference>
<dbReference type="SMR" id="E4UYQ9"/>
<dbReference type="STRING" id="535722.E4UYQ9"/>
<dbReference type="GeneID" id="10026947"/>
<dbReference type="VEuPathDB" id="FungiDB:MGYG_06241"/>
<dbReference type="eggNOG" id="ENOG502SGF5">
    <property type="taxonomic scope" value="Eukaryota"/>
</dbReference>
<dbReference type="HOGENOM" id="CLU_039313_1_0_1"/>
<dbReference type="InParanoid" id="E4UYQ9"/>
<dbReference type="OMA" id="DGPLIAY"/>
<dbReference type="OrthoDB" id="412874at2759"/>
<dbReference type="Proteomes" id="UP000002669">
    <property type="component" value="Unassembled WGS sequence"/>
</dbReference>
<dbReference type="GO" id="GO:0005576">
    <property type="term" value="C:extracellular region"/>
    <property type="evidence" value="ECO:0007669"/>
    <property type="project" value="UniProtKB-SubCell"/>
</dbReference>
<dbReference type="GO" id="GO:0046872">
    <property type="term" value="F:metal ion binding"/>
    <property type="evidence" value="ECO:0007669"/>
    <property type="project" value="UniProtKB-KW"/>
</dbReference>
<dbReference type="GO" id="GO:0004222">
    <property type="term" value="F:metalloendopeptidase activity"/>
    <property type="evidence" value="ECO:0007669"/>
    <property type="project" value="InterPro"/>
</dbReference>
<dbReference type="GO" id="GO:0006508">
    <property type="term" value="P:proteolysis"/>
    <property type="evidence" value="ECO:0007669"/>
    <property type="project" value="UniProtKB-KW"/>
</dbReference>
<dbReference type="CDD" id="cd11008">
    <property type="entry name" value="M35_deuterolysin_like"/>
    <property type="match status" value="1"/>
</dbReference>
<dbReference type="Gene3D" id="2.60.40.2970">
    <property type="match status" value="1"/>
</dbReference>
<dbReference type="Gene3D" id="3.40.390.10">
    <property type="entry name" value="Collagenase (Catalytic Domain)"/>
    <property type="match status" value="1"/>
</dbReference>
<dbReference type="InterPro" id="IPR050414">
    <property type="entry name" value="Fungal_M35_metalloproteases"/>
</dbReference>
<dbReference type="InterPro" id="IPR024079">
    <property type="entry name" value="MetalloPept_cat_dom_sf"/>
</dbReference>
<dbReference type="InterPro" id="IPR001384">
    <property type="entry name" value="Peptidase_M35"/>
</dbReference>
<dbReference type="PANTHER" id="PTHR37016">
    <property type="match status" value="1"/>
</dbReference>
<dbReference type="PANTHER" id="PTHR37016:SF3">
    <property type="entry name" value="NEUTRAL PROTEASE 2-RELATED"/>
    <property type="match status" value="1"/>
</dbReference>
<dbReference type="Pfam" id="PF02102">
    <property type="entry name" value="Peptidase_M35"/>
    <property type="match status" value="1"/>
</dbReference>
<dbReference type="PRINTS" id="PR00768">
    <property type="entry name" value="DEUTEROLYSIN"/>
</dbReference>
<dbReference type="SUPFAM" id="SSF55486">
    <property type="entry name" value="Metalloproteases ('zincins'), catalytic domain"/>
    <property type="match status" value="1"/>
</dbReference>
<evidence type="ECO:0000250" key="1"/>
<evidence type="ECO:0000255" key="2"/>
<evidence type="ECO:0000305" key="3"/>
<name>NPIIF_ARTGP</name>
<accession>E4UYQ9</accession>
<sequence length="372" mass="41382">MQFFTAIAAISALVAPALALPTQELPQAPTNQTLHVRLIPTGNTMVKAVVTNNGDRPLNLLKFNTIMDENPTAKVNVVHEDGEEVEFTGMLPRYSMRSLPKSVFTRLAPKDSVEHVFDIATVHNLKRSGKYTLSARGAVPVAEGDDTAIIDHVYYQSNDLTMEIDARKAALIPRAFEDTHFAGTLNRRGGLNSTCSPRRYQVIKRALNDARMIASSASKAVSSNPEKFREFFGTTDPNAMKQVSERLMAIAQASVENGPIKWHCFDSRGRCEQNVVAYTLPSRNEVFPCMPFFTESDFTNKCHAQDKPTTLIHEAAHNPSVVQPFCRDHGYGYDHVSRLPPRLALQNADNYSIYAQGKFHLHLPLKVVFSPN</sequence>
<keyword id="KW-0165">Cleavage on pair of basic residues</keyword>
<keyword id="KW-1015">Disulfide bond</keyword>
<keyword id="KW-0378">Hydrolase</keyword>
<keyword id="KW-0479">Metal-binding</keyword>
<keyword id="KW-0482">Metalloprotease</keyword>
<keyword id="KW-0645">Protease</keyword>
<keyword id="KW-1185">Reference proteome</keyword>
<keyword id="KW-0964">Secreted</keyword>
<keyword id="KW-0732">Signal</keyword>
<keyword id="KW-0843">Virulence</keyword>
<keyword id="KW-0862">Zinc</keyword>
<keyword id="KW-0865">Zymogen</keyword>
<comment type="function">
    <text evidence="1">Secreted metalloproteinase that allows assimilation of proteinaceous substrates. Shows high activities on basic nuclear substrates such as histone and protamine. May be involved in virulence (By similarity).</text>
</comment>
<comment type="catalytic activity">
    <reaction>
        <text>Preferential cleavage of bonds with hydrophobic residues in P1'. Also 3-Asn-|-Gln-4 and 8-Gly-|-Ser-9 bonds in insulin B chain.</text>
        <dbReference type="EC" id="3.4.24.39"/>
    </reaction>
</comment>
<comment type="cofactor">
    <cofactor evidence="1">
        <name>Zn(2+)</name>
        <dbReference type="ChEBI" id="CHEBI:29105"/>
    </cofactor>
    <text evidence="1">Binds 1 zinc ion per subunit.</text>
</comment>
<comment type="subcellular location">
    <subcellularLocation>
        <location evidence="1">Secreted</location>
    </subcellularLocation>
</comment>
<comment type="similarity">
    <text evidence="3">Belongs to the peptidase M35 family.</text>
</comment>
<organism>
    <name type="scientific">Arthroderma gypseum (strain ATCC MYA-4604 / CBS 118893)</name>
    <name type="common">Microsporum gypseum</name>
    <dbReference type="NCBI Taxonomy" id="535722"/>
    <lineage>
        <taxon>Eukaryota</taxon>
        <taxon>Fungi</taxon>
        <taxon>Dikarya</taxon>
        <taxon>Ascomycota</taxon>
        <taxon>Pezizomycotina</taxon>
        <taxon>Eurotiomycetes</taxon>
        <taxon>Eurotiomycetidae</taxon>
        <taxon>Onygenales</taxon>
        <taxon>Arthrodermataceae</taxon>
        <taxon>Nannizzia</taxon>
    </lineage>
</organism>
<reference key="1">
    <citation type="journal article" date="2012" name="MBio">
        <title>Comparative genome analysis of Trichophyton rubrum and related dermatophytes reveals candidate genes involved in infection.</title>
        <authorList>
            <person name="Martinez D.A."/>
            <person name="Oliver B.G."/>
            <person name="Graeser Y."/>
            <person name="Goldberg J.M."/>
            <person name="Li W."/>
            <person name="Martinez-Rossi N.M."/>
            <person name="Monod M."/>
            <person name="Shelest E."/>
            <person name="Barton R.C."/>
            <person name="Birch E."/>
            <person name="Brakhage A.A."/>
            <person name="Chen Z."/>
            <person name="Gurr S.J."/>
            <person name="Heiman D."/>
            <person name="Heitman J."/>
            <person name="Kosti I."/>
            <person name="Rossi A."/>
            <person name="Saif S."/>
            <person name="Samalova M."/>
            <person name="Saunders C.W."/>
            <person name="Shea T."/>
            <person name="Summerbell R.C."/>
            <person name="Xu J."/>
            <person name="Young S."/>
            <person name="Zeng Q."/>
            <person name="Birren B.W."/>
            <person name="Cuomo C.A."/>
            <person name="White T.C."/>
        </authorList>
    </citation>
    <scope>NUCLEOTIDE SEQUENCE [LARGE SCALE GENOMIC DNA]</scope>
    <source>
        <strain>ATCC MYA-4604 / CBS 118893</strain>
    </source>
</reference>
<gene>
    <name type="ORF">MGYG_06241</name>
</gene>